<dbReference type="EC" id="2.7.7.6" evidence="1"/>
<dbReference type="EMBL" id="CP001129">
    <property type="protein sequence ID" value="ACG61490.1"/>
    <property type="molecule type" value="Genomic_DNA"/>
</dbReference>
<dbReference type="RefSeq" id="WP_012514773.1">
    <property type="nucleotide sequence ID" value="NC_011134.1"/>
</dbReference>
<dbReference type="SMR" id="B4U047"/>
<dbReference type="KEGG" id="sez:Sez_0108"/>
<dbReference type="HOGENOM" id="CLU_000524_4_1_9"/>
<dbReference type="Proteomes" id="UP000001873">
    <property type="component" value="Chromosome"/>
</dbReference>
<dbReference type="GO" id="GO:0000428">
    <property type="term" value="C:DNA-directed RNA polymerase complex"/>
    <property type="evidence" value="ECO:0007669"/>
    <property type="project" value="UniProtKB-KW"/>
</dbReference>
<dbReference type="GO" id="GO:0003677">
    <property type="term" value="F:DNA binding"/>
    <property type="evidence" value="ECO:0007669"/>
    <property type="project" value="UniProtKB-UniRule"/>
</dbReference>
<dbReference type="GO" id="GO:0003899">
    <property type="term" value="F:DNA-directed RNA polymerase activity"/>
    <property type="evidence" value="ECO:0007669"/>
    <property type="project" value="UniProtKB-UniRule"/>
</dbReference>
<dbReference type="GO" id="GO:0032549">
    <property type="term" value="F:ribonucleoside binding"/>
    <property type="evidence" value="ECO:0007669"/>
    <property type="project" value="InterPro"/>
</dbReference>
<dbReference type="GO" id="GO:0006351">
    <property type="term" value="P:DNA-templated transcription"/>
    <property type="evidence" value="ECO:0007669"/>
    <property type="project" value="UniProtKB-UniRule"/>
</dbReference>
<dbReference type="CDD" id="cd00653">
    <property type="entry name" value="RNA_pol_B_RPB2"/>
    <property type="match status" value="1"/>
</dbReference>
<dbReference type="Gene3D" id="2.40.50.100">
    <property type="match status" value="1"/>
</dbReference>
<dbReference type="Gene3D" id="2.40.50.150">
    <property type="match status" value="1"/>
</dbReference>
<dbReference type="Gene3D" id="3.90.1100.10">
    <property type="match status" value="2"/>
</dbReference>
<dbReference type="Gene3D" id="2.30.150.10">
    <property type="entry name" value="DNA-directed RNA polymerase, beta subunit, external 1 domain"/>
    <property type="match status" value="1"/>
</dbReference>
<dbReference type="Gene3D" id="2.40.270.10">
    <property type="entry name" value="DNA-directed RNA polymerase, subunit 2, domain 6"/>
    <property type="match status" value="1"/>
</dbReference>
<dbReference type="Gene3D" id="3.90.1800.10">
    <property type="entry name" value="RNA polymerase alpha subunit dimerisation domain"/>
    <property type="match status" value="1"/>
</dbReference>
<dbReference type="Gene3D" id="3.90.1110.10">
    <property type="entry name" value="RNA polymerase Rpb2, domain 2"/>
    <property type="match status" value="1"/>
</dbReference>
<dbReference type="HAMAP" id="MF_01321">
    <property type="entry name" value="RNApol_bact_RpoB"/>
    <property type="match status" value="1"/>
</dbReference>
<dbReference type="InterPro" id="IPR042107">
    <property type="entry name" value="DNA-dir_RNA_pol_bsu_ext_1_sf"/>
</dbReference>
<dbReference type="InterPro" id="IPR019462">
    <property type="entry name" value="DNA-dir_RNA_pol_bsu_external_1"/>
</dbReference>
<dbReference type="InterPro" id="IPR015712">
    <property type="entry name" value="DNA-dir_RNA_pol_su2"/>
</dbReference>
<dbReference type="InterPro" id="IPR007120">
    <property type="entry name" value="DNA-dir_RNAP_su2_dom"/>
</dbReference>
<dbReference type="InterPro" id="IPR037033">
    <property type="entry name" value="DNA-dir_RNAP_su2_hyb_sf"/>
</dbReference>
<dbReference type="InterPro" id="IPR010243">
    <property type="entry name" value="RNA_pol_bsu_bac"/>
</dbReference>
<dbReference type="InterPro" id="IPR007121">
    <property type="entry name" value="RNA_pol_bsu_CS"/>
</dbReference>
<dbReference type="InterPro" id="IPR007644">
    <property type="entry name" value="RNA_pol_bsu_protrusion"/>
</dbReference>
<dbReference type="InterPro" id="IPR007642">
    <property type="entry name" value="RNA_pol_Rpb2_2"/>
</dbReference>
<dbReference type="InterPro" id="IPR037034">
    <property type="entry name" value="RNA_pol_Rpb2_2_sf"/>
</dbReference>
<dbReference type="InterPro" id="IPR007645">
    <property type="entry name" value="RNA_pol_Rpb2_3"/>
</dbReference>
<dbReference type="InterPro" id="IPR007641">
    <property type="entry name" value="RNA_pol_Rpb2_7"/>
</dbReference>
<dbReference type="InterPro" id="IPR014724">
    <property type="entry name" value="RNA_pol_RPB2_OB-fold"/>
</dbReference>
<dbReference type="NCBIfam" id="NF001616">
    <property type="entry name" value="PRK00405.1"/>
    <property type="match status" value="1"/>
</dbReference>
<dbReference type="NCBIfam" id="TIGR02013">
    <property type="entry name" value="rpoB"/>
    <property type="match status" value="1"/>
</dbReference>
<dbReference type="PANTHER" id="PTHR20856">
    <property type="entry name" value="DNA-DIRECTED RNA POLYMERASE I SUBUNIT 2"/>
    <property type="match status" value="1"/>
</dbReference>
<dbReference type="Pfam" id="PF04563">
    <property type="entry name" value="RNA_pol_Rpb2_1"/>
    <property type="match status" value="1"/>
</dbReference>
<dbReference type="Pfam" id="PF04561">
    <property type="entry name" value="RNA_pol_Rpb2_2"/>
    <property type="match status" value="2"/>
</dbReference>
<dbReference type="Pfam" id="PF04565">
    <property type="entry name" value="RNA_pol_Rpb2_3"/>
    <property type="match status" value="1"/>
</dbReference>
<dbReference type="Pfam" id="PF10385">
    <property type="entry name" value="RNA_pol_Rpb2_45"/>
    <property type="match status" value="1"/>
</dbReference>
<dbReference type="Pfam" id="PF00562">
    <property type="entry name" value="RNA_pol_Rpb2_6"/>
    <property type="match status" value="1"/>
</dbReference>
<dbReference type="Pfam" id="PF04560">
    <property type="entry name" value="RNA_pol_Rpb2_7"/>
    <property type="match status" value="1"/>
</dbReference>
<dbReference type="SUPFAM" id="SSF64484">
    <property type="entry name" value="beta and beta-prime subunits of DNA dependent RNA-polymerase"/>
    <property type="match status" value="1"/>
</dbReference>
<dbReference type="PROSITE" id="PS01166">
    <property type="entry name" value="RNA_POL_BETA"/>
    <property type="match status" value="1"/>
</dbReference>
<accession>B4U047</accession>
<reference key="1">
    <citation type="journal article" date="2008" name="PLoS ONE">
        <title>Genome sequence of a lancefield group C Streptococcus zooepidemicus strain causing epidemic nephritis: new information about an old disease.</title>
        <authorList>
            <person name="Beres S.B."/>
            <person name="Sesso R."/>
            <person name="Pinto S.W.L."/>
            <person name="Hoe N.P."/>
            <person name="Porcella S.F."/>
            <person name="Deleo F.R."/>
            <person name="Musser J.M."/>
        </authorList>
    </citation>
    <scope>NUCLEOTIDE SEQUENCE [LARGE SCALE GENOMIC DNA]</scope>
    <source>
        <strain>MGCS10565</strain>
    </source>
</reference>
<evidence type="ECO:0000255" key="1">
    <source>
        <dbReference type="HAMAP-Rule" id="MF_01321"/>
    </source>
</evidence>
<gene>
    <name evidence="1" type="primary">rpoB</name>
    <name type="ordered locus">Sez_0108</name>
</gene>
<feature type="chain" id="PRO_1000141740" description="DNA-directed RNA polymerase subunit beta">
    <location>
        <begin position="1"/>
        <end position="1188"/>
    </location>
</feature>
<protein>
    <recommendedName>
        <fullName evidence="1">DNA-directed RNA polymerase subunit beta</fullName>
        <shortName evidence="1">RNAP subunit beta</shortName>
        <ecNumber evidence="1">2.7.7.6</ecNumber>
    </recommendedName>
    <alternativeName>
        <fullName evidence="1">RNA polymerase subunit beta</fullName>
    </alternativeName>
    <alternativeName>
        <fullName evidence="1">Transcriptase subunit beta</fullName>
    </alternativeName>
</protein>
<keyword id="KW-0240">DNA-directed RNA polymerase</keyword>
<keyword id="KW-0548">Nucleotidyltransferase</keyword>
<keyword id="KW-0804">Transcription</keyword>
<keyword id="KW-0808">Transferase</keyword>
<name>RPOB_STREM</name>
<comment type="function">
    <text evidence="1">DNA-dependent RNA polymerase catalyzes the transcription of DNA into RNA using the four ribonucleoside triphosphates as substrates.</text>
</comment>
<comment type="catalytic activity">
    <reaction evidence="1">
        <text>RNA(n) + a ribonucleoside 5'-triphosphate = RNA(n+1) + diphosphate</text>
        <dbReference type="Rhea" id="RHEA:21248"/>
        <dbReference type="Rhea" id="RHEA-COMP:14527"/>
        <dbReference type="Rhea" id="RHEA-COMP:17342"/>
        <dbReference type="ChEBI" id="CHEBI:33019"/>
        <dbReference type="ChEBI" id="CHEBI:61557"/>
        <dbReference type="ChEBI" id="CHEBI:140395"/>
        <dbReference type="EC" id="2.7.7.6"/>
    </reaction>
</comment>
<comment type="subunit">
    <text evidence="1">The RNAP catalytic core consists of 2 alpha, 1 beta, 1 beta' and 1 omega subunit. When a sigma factor is associated with the core the holoenzyme is formed, which can initiate transcription.</text>
</comment>
<comment type="similarity">
    <text evidence="1">Belongs to the RNA polymerase beta chain family.</text>
</comment>
<organism>
    <name type="scientific">Streptococcus equi subsp. zooepidemicus (strain MGCS10565)</name>
    <dbReference type="NCBI Taxonomy" id="552526"/>
    <lineage>
        <taxon>Bacteria</taxon>
        <taxon>Bacillati</taxon>
        <taxon>Bacillota</taxon>
        <taxon>Bacilli</taxon>
        <taxon>Lactobacillales</taxon>
        <taxon>Streptococcaceae</taxon>
        <taxon>Streptococcus</taxon>
    </lineage>
</organism>
<sequence>MAGHDVQYGKHRTRRSFSRIKEVLDLPNLIEIQTDSFQDFLDSGLKEVFEDVLPISNFTDTMELEFVGYEFKEPKYTLEEARIHDASYSAPIFVTFRLINKETGEIKTQEVFFGDFPIMTEMGTFIINGGERIIVSQLVRSPGVYFNDKVDKNGKVGYGSTVIPNRGAWLELETDSKDIAYTRIDRTRKIPFTTLVRALGFSGDDEIIDIFGDSELVRNTIEKDIHKNQSDSRTDEALKEIYERLRPGEPKTADSSRSLLTARFFDARRYDLAAVGRYKINKKLNIKTRLLNQIIAENLIDSETGEILVEAGTEMTRSVIESIEEQLDGDLNKFVYTPNDYAVVTEPVILQKFKVVSPVDPDRVVTIVGNANPDDKVRALTPADILAEMSYFLNLAEGLGKVDDIDHLGNRRIRAVGELLANQFRIGLARMERNVRERMSVQDNDVLTPQQIINIRPVTAAVKEFFGSSQLSQFMDQHNPLSELSHKRRLSALGPGGLTRDRAGYEVRDVHYTHYGRMCPIETPEGPNIGLINNLSSFGHLNKYGFIQTPYRKVDRVIGRVTNEIVWLTADEEDEFTVAQANSKLNPDGTFAEEIVMGRHQGNNQEFPASQVDFVDVSPKQVVAVATACIPFLENDDSNRALMGANMQRQAVPLIDPKAPYVGTGMEYQAAHDSGAAVIAQHNGKVVFSDAERVEVRREDGSLDVYHITKFRRSNSGTAYNQRTLVKIGDIVEKGDFIADGPSMEKGEMALGQNPIVAYMTWEGYNFEDAVIMSERLVKEDVYTSVHLEEFESETRDTKLGPEEITREVPNVGEEALKDLDEMGIIRIGAEVKEGDILVGKVTPKGEKDLSAEERLLHAIFGDKSREVRDTSLRVPHGGDGIVRDVKIFTRANGDELQSGVNMLVRVYIAQKRKIKVGDKMAGRHGNKGVVSRIVPVEDMPYLPDGTPVDIMLNPLGVPSRMNIGQVMELHLGMAARNLGIHIATPVFDGATSEDLWETVREAGMDSDAKTVLYDGRTGEPFDNRVSVGVMYMIKLHHMVDDKLHARSVGPYSLVTQQPLGGKAQFGGQRFGEMEVWALEAYGASNVLQEILTYKSDDVNGRLKAYEAITKGKPIPKPGVPESFRVLVKELQSLGLDMRVLDEDDNEVELRDLDEGEDDDVMHVDDLEKAREKQAQETQDIAESTEDN</sequence>
<proteinExistence type="inferred from homology"/>